<reference key="1">
    <citation type="journal article" date="1992" name="J. Bacteriol.">
        <title>Structures of chaperonins from an intracellular symbiont and their functional expression in Escherichia coli groE mutants.</title>
        <authorList>
            <person name="Ohtaka C."/>
            <person name="Nakamura H."/>
            <person name="Ishikawa H."/>
        </authorList>
    </citation>
    <scope>NUCLEOTIDE SEQUENCE [GENOMIC DNA]</scope>
</reference>
<reference key="2">
    <citation type="journal article" date="2000" name="Nature">
        <title>Genome sequence of the endocellular bacterial symbiont of aphids Buchnera sp. APS.</title>
        <authorList>
            <person name="Shigenobu S."/>
            <person name="Watanabe H."/>
            <person name="Hattori M."/>
            <person name="Sakaki Y."/>
            <person name="Ishikawa H."/>
        </authorList>
    </citation>
    <scope>NUCLEOTIDE SEQUENCE [LARGE SCALE GENOMIC DNA]</scope>
    <source>
        <strain>APS</strain>
    </source>
</reference>
<keyword id="KW-0067">ATP-binding</keyword>
<keyword id="KW-0143">Chaperone</keyword>
<keyword id="KW-0963">Cytoplasm</keyword>
<keyword id="KW-0413">Isomerase</keyword>
<keyword id="KW-0547">Nucleotide-binding</keyword>
<keyword id="KW-1185">Reference proteome</keyword>
<organism>
    <name type="scientific">Buchnera aphidicola subsp. Acyrthosiphon pisum (strain APS)</name>
    <name type="common">Acyrthosiphon pisum symbiotic bacterium</name>
    <dbReference type="NCBI Taxonomy" id="107806"/>
    <lineage>
        <taxon>Bacteria</taxon>
        <taxon>Pseudomonadati</taxon>
        <taxon>Pseudomonadota</taxon>
        <taxon>Gammaproteobacteria</taxon>
        <taxon>Enterobacterales</taxon>
        <taxon>Erwiniaceae</taxon>
        <taxon>Buchnera</taxon>
    </lineage>
</organism>
<sequence length="548" mass="57911">MAAKDVKFGNEARIKMLRGVNVLADAVKVTLGPKGRNVVLDKSFGAPSITKDGVSVAREIELEDKFENMGAQMVKEVASKANDAAGDGTTTATLLAQSIVNEGLKAVAAGMNPMDLKRGIDKAVISAVEELKHLSVPCSDSKAITQVGTISANADEKVGSLIAEAMEKVGNDGVITVEEGTGLQDELEVVKGMQFDRGYLSPYFINKPETGIVELENPYILMADKKISNVREMLPILESVAKSGKPLLIISEDLEGEALATLVVNSMRGIVKVAAVKAPGFGDRRKAMLQDISILTGGSVISEELAMELEKSTLEDLGQAKRVVISKDTTTIIGGVGEKHSIQSRISQIRQEIQEATSDYDKEKLNERLAKLSGGVAVLKVGAATEVEMKEKKARVEDALHATRAAVEEGVVAGGGVALVRVAGKIADLRGQNEDQNVGIRVALRAMEAPLRQIVSNSGEEPSVVTNNVKDGKGNYGYNAATDEYGDMIDFGILDPTKVTRSALQYAASVAGLMITTECMVTDLPKEDKSSDSSSSPAGGMGGMGGMM</sequence>
<gene>
    <name evidence="1" type="primary">groEL</name>
    <name evidence="1" type="synonym">groL</name>
    <name type="synonym">mopA</name>
    <name type="synonym">symL</name>
    <name type="ordered locus">BU019</name>
</gene>
<proteinExistence type="inferred from homology"/>
<protein>
    <recommendedName>
        <fullName evidence="1">Chaperonin GroEL</fullName>
        <ecNumber evidence="1">5.6.1.7</ecNumber>
    </recommendedName>
    <alternativeName>
        <fullName evidence="1">60 kDa chaperonin</fullName>
    </alternativeName>
    <alternativeName>
        <fullName evidence="1">Chaperonin-60</fullName>
        <shortName evidence="1">Cpn60</shortName>
    </alternativeName>
</protein>
<comment type="function">
    <text evidence="1">Together with its co-chaperonin GroES, plays an essential role in assisting protein folding. The GroEL-GroES system forms a nano-cage that allows encapsulation of the non-native substrate proteins and provides a physical environment optimized to promote and accelerate protein folding.</text>
</comment>
<comment type="catalytic activity">
    <reaction evidence="1">
        <text>ATP + H2O + a folded polypeptide = ADP + phosphate + an unfolded polypeptide.</text>
        <dbReference type="EC" id="5.6.1.7"/>
    </reaction>
</comment>
<comment type="subunit">
    <text evidence="1">Forms a cylinder of 14 subunits composed of two heptameric rings stacked back-to-back. Interacts with the co-chaperonin GroES.</text>
</comment>
<comment type="subcellular location">
    <subcellularLocation>
        <location evidence="1">Cytoplasm</location>
    </subcellularLocation>
</comment>
<comment type="similarity">
    <text evidence="1">Belongs to the chaperonin (HSP60) family.</text>
</comment>
<evidence type="ECO:0000255" key="1">
    <source>
        <dbReference type="HAMAP-Rule" id="MF_00600"/>
    </source>
</evidence>
<evidence type="ECO:0000256" key="2">
    <source>
        <dbReference type="SAM" id="MobiDB-lite"/>
    </source>
</evidence>
<dbReference type="EC" id="5.6.1.7" evidence="1"/>
<dbReference type="EMBL" id="X61150">
    <property type="protein sequence ID" value="CAA43460.1"/>
    <property type="molecule type" value="Genomic_DNA"/>
</dbReference>
<dbReference type="EMBL" id="BA000003">
    <property type="protein sequence ID" value="BAB12746.1"/>
    <property type="molecule type" value="Genomic_DNA"/>
</dbReference>
<dbReference type="RefSeq" id="NP_239860.1">
    <property type="nucleotide sequence ID" value="NC_002528.1"/>
</dbReference>
<dbReference type="RefSeq" id="WP_009873980.1">
    <property type="nucleotide sequence ID" value="NC_002528.1"/>
</dbReference>
<dbReference type="SMR" id="P25750"/>
<dbReference type="STRING" id="563178.BUAP5A_019"/>
<dbReference type="EnsemblBacteria" id="BAB12746">
    <property type="protein sequence ID" value="BAB12746"/>
    <property type="gene ID" value="BAB12746"/>
</dbReference>
<dbReference type="KEGG" id="buc:BU019"/>
<dbReference type="PATRIC" id="fig|107806.10.peg.31"/>
<dbReference type="eggNOG" id="COG0459">
    <property type="taxonomic scope" value="Bacteria"/>
</dbReference>
<dbReference type="HOGENOM" id="CLU_016503_3_0_6"/>
<dbReference type="Proteomes" id="UP000001806">
    <property type="component" value="Chromosome"/>
</dbReference>
<dbReference type="GO" id="GO:0005737">
    <property type="term" value="C:cytoplasm"/>
    <property type="evidence" value="ECO:0007669"/>
    <property type="project" value="UniProtKB-SubCell"/>
</dbReference>
<dbReference type="GO" id="GO:0005524">
    <property type="term" value="F:ATP binding"/>
    <property type="evidence" value="ECO:0007669"/>
    <property type="project" value="UniProtKB-UniRule"/>
</dbReference>
<dbReference type="GO" id="GO:0140662">
    <property type="term" value="F:ATP-dependent protein folding chaperone"/>
    <property type="evidence" value="ECO:0007669"/>
    <property type="project" value="InterPro"/>
</dbReference>
<dbReference type="GO" id="GO:0016853">
    <property type="term" value="F:isomerase activity"/>
    <property type="evidence" value="ECO:0007669"/>
    <property type="project" value="UniProtKB-KW"/>
</dbReference>
<dbReference type="GO" id="GO:0051082">
    <property type="term" value="F:unfolded protein binding"/>
    <property type="evidence" value="ECO:0007669"/>
    <property type="project" value="UniProtKB-UniRule"/>
</dbReference>
<dbReference type="GO" id="GO:0042026">
    <property type="term" value="P:protein refolding"/>
    <property type="evidence" value="ECO:0007669"/>
    <property type="project" value="UniProtKB-UniRule"/>
</dbReference>
<dbReference type="CDD" id="cd03344">
    <property type="entry name" value="GroEL"/>
    <property type="match status" value="1"/>
</dbReference>
<dbReference type="FunFam" id="1.10.560.10:FF:000001">
    <property type="entry name" value="60 kDa chaperonin"/>
    <property type="match status" value="1"/>
</dbReference>
<dbReference type="FunFam" id="3.50.7.10:FF:000001">
    <property type="entry name" value="60 kDa chaperonin"/>
    <property type="match status" value="1"/>
</dbReference>
<dbReference type="Gene3D" id="3.50.7.10">
    <property type="entry name" value="GroEL"/>
    <property type="match status" value="1"/>
</dbReference>
<dbReference type="Gene3D" id="1.10.560.10">
    <property type="entry name" value="GroEL-like equatorial domain"/>
    <property type="match status" value="1"/>
</dbReference>
<dbReference type="Gene3D" id="3.30.260.10">
    <property type="entry name" value="TCP-1-like chaperonin intermediate domain"/>
    <property type="match status" value="1"/>
</dbReference>
<dbReference type="HAMAP" id="MF_00600">
    <property type="entry name" value="CH60"/>
    <property type="match status" value="1"/>
</dbReference>
<dbReference type="InterPro" id="IPR018370">
    <property type="entry name" value="Chaperonin_Cpn60_CS"/>
</dbReference>
<dbReference type="InterPro" id="IPR001844">
    <property type="entry name" value="Cpn60/GroEL"/>
</dbReference>
<dbReference type="InterPro" id="IPR002423">
    <property type="entry name" value="Cpn60/GroEL/TCP-1"/>
</dbReference>
<dbReference type="InterPro" id="IPR027409">
    <property type="entry name" value="GroEL-like_apical_dom_sf"/>
</dbReference>
<dbReference type="InterPro" id="IPR027413">
    <property type="entry name" value="GROEL-like_equatorial_sf"/>
</dbReference>
<dbReference type="InterPro" id="IPR027410">
    <property type="entry name" value="TCP-1-like_intermed_sf"/>
</dbReference>
<dbReference type="NCBIfam" id="TIGR02348">
    <property type="entry name" value="GroEL"/>
    <property type="match status" value="1"/>
</dbReference>
<dbReference type="NCBIfam" id="NF000592">
    <property type="entry name" value="PRK00013.1"/>
    <property type="match status" value="1"/>
</dbReference>
<dbReference type="NCBIfam" id="NF009487">
    <property type="entry name" value="PRK12849.1"/>
    <property type="match status" value="1"/>
</dbReference>
<dbReference type="NCBIfam" id="NF009488">
    <property type="entry name" value="PRK12850.1"/>
    <property type="match status" value="1"/>
</dbReference>
<dbReference type="NCBIfam" id="NF009489">
    <property type="entry name" value="PRK12851.1"/>
    <property type="match status" value="1"/>
</dbReference>
<dbReference type="PANTHER" id="PTHR45633">
    <property type="entry name" value="60 KDA HEAT SHOCK PROTEIN, MITOCHONDRIAL"/>
    <property type="match status" value="1"/>
</dbReference>
<dbReference type="Pfam" id="PF00118">
    <property type="entry name" value="Cpn60_TCP1"/>
    <property type="match status" value="1"/>
</dbReference>
<dbReference type="PRINTS" id="PR00298">
    <property type="entry name" value="CHAPERONIN60"/>
</dbReference>
<dbReference type="SUPFAM" id="SSF52029">
    <property type="entry name" value="GroEL apical domain-like"/>
    <property type="match status" value="1"/>
</dbReference>
<dbReference type="SUPFAM" id="SSF48592">
    <property type="entry name" value="GroEL equatorial domain-like"/>
    <property type="match status" value="1"/>
</dbReference>
<dbReference type="SUPFAM" id="SSF54849">
    <property type="entry name" value="GroEL-intermediate domain like"/>
    <property type="match status" value="1"/>
</dbReference>
<dbReference type="PROSITE" id="PS00296">
    <property type="entry name" value="CHAPERONINS_CPN60"/>
    <property type="match status" value="1"/>
</dbReference>
<feature type="chain" id="PRO_0000063305" description="Chaperonin GroEL">
    <location>
        <begin position="1"/>
        <end position="548"/>
    </location>
</feature>
<feature type="region of interest" description="Disordered" evidence="2">
    <location>
        <begin position="524"/>
        <end position="548"/>
    </location>
</feature>
<feature type="compositionally biased region" description="Gly residues" evidence="2">
    <location>
        <begin position="539"/>
        <end position="548"/>
    </location>
</feature>
<feature type="binding site" evidence="1">
    <location>
        <begin position="30"/>
        <end position="33"/>
    </location>
    <ligand>
        <name>ATP</name>
        <dbReference type="ChEBI" id="CHEBI:30616"/>
    </ligand>
</feature>
<feature type="binding site" evidence="1">
    <location>
        <position position="51"/>
    </location>
    <ligand>
        <name>ATP</name>
        <dbReference type="ChEBI" id="CHEBI:30616"/>
    </ligand>
</feature>
<feature type="binding site" evidence="1">
    <location>
        <begin position="87"/>
        <end position="91"/>
    </location>
    <ligand>
        <name>ATP</name>
        <dbReference type="ChEBI" id="CHEBI:30616"/>
    </ligand>
</feature>
<feature type="binding site" evidence="1">
    <location>
        <position position="415"/>
    </location>
    <ligand>
        <name>ATP</name>
        <dbReference type="ChEBI" id="CHEBI:30616"/>
    </ligand>
</feature>
<feature type="binding site" evidence="1">
    <location>
        <begin position="479"/>
        <end position="481"/>
    </location>
    <ligand>
        <name>ATP</name>
        <dbReference type="ChEBI" id="CHEBI:30616"/>
    </ligand>
</feature>
<feature type="binding site" evidence="1">
    <location>
        <position position="495"/>
    </location>
    <ligand>
        <name>ATP</name>
        <dbReference type="ChEBI" id="CHEBI:30616"/>
    </ligand>
</feature>
<accession>P25750</accession>
<name>CH60_BUCAI</name>